<gene>
    <name evidence="1" type="primary">ttcA</name>
    <name type="ordered locus">NGR_c16340</name>
</gene>
<feature type="chain" id="PRO_1000188651" description="tRNA-cytidine(32) 2-sulfurtransferase">
    <location>
        <begin position="1"/>
        <end position="296"/>
    </location>
</feature>
<feature type="short sequence motif" description="PP-loop motif" evidence="1">
    <location>
        <begin position="72"/>
        <end position="77"/>
    </location>
</feature>
<feature type="binding site" evidence="1">
    <location>
        <position position="147"/>
    </location>
    <ligand>
        <name>[4Fe-4S] cluster</name>
        <dbReference type="ChEBI" id="CHEBI:49883"/>
    </ligand>
</feature>
<feature type="binding site" evidence="1">
    <location>
        <position position="150"/>
    </location>
    <ligand>
        <name>[4Fe-4S] cluster</name>
        <dbReference type="ChEBI" id="CHEBI:49883"/>
    </ligand>
</feature>
<feature type="binding site" evidence="1">
    <location>
        <position position="238"/>
    </location>
    <ligand>
        <name>[4Fe-4S] cluster</name>
        <dbReference type="ChEBI" id="CHEBI:49883"/>
    </ligand>
</feature>
<evidence type="ECO:0000255" key="1">
    <source>
        <dbReference type="HAMAP-Rule" id="MF_01850"/>
    </source>
</evidence>
<sequence length="296" mass="33464">MELSRSSQREMMDVAVDAEDNAFDTGDHRLFARMPSSVSFNKLRKRLLRQVRQAFDGFGMLKGSKRWLVGVSGGKDSYSLLALLMDLKWRGLLPVELIACNLDQGQPNFPKHILPDYLASIGVRHRIEYRDTYSIVKEKVPTGATYCSLCSRLRRGNLYRIAREEGCDALVLGHHREDILETFFMNFFHGGRLASMPAKLLNDEGDLTVLRPLTYAAEDDLAKFAAAMEFPIIPCDLCGSQDGLERNAMKAMLADIERRMPGRKDTMLRALGHVNPSHLLDPKLFDFQSLSPEPKE</sequence>
<organism>
    <name type="scientific">Sinorhizobium fredii (strain NBRC 101917 / NGR234)</name>
    <dbReference type="NCBI Taxonomy" id="394"/>
    <lineage>
        <taxon>Bacteria</taxon>
        <taxon>Pseudomonadati</taxon>
        <taxon>Pseudomonadota</taxon>
        <taxon>Alphaproteobacteria</taxon>
        <taxon>Hyphomicrobiales</taxon>
        <taxon>Rhizobiaceae</taxon>
        <taxon>Sinorhizobium/Ensifer group</taxon>
        <taxon>Sinorhizobium</taxon>
    </lineage>
</organism>
<name>TTCA_SINFN</name>
<protein>
    <recommendedName>
        <fullName evidence="1">tRNA-cytidine(32) 2-sulfurtransferase</fullName>
        <ecNumber evidence="1">2.8.1.-</ecNumber>
    </recommendedName>
    <alternativeName>
        <fullName evidence="1">Two-thiocytidine biosynthesis protein A</fullName>
    </alternativeName>
    <alternativeName>
        <fullName evidence="1">tRNA 2-thiocytidine biosynthesis protein TtcA</fullName>
    </alternativeName>
</protein>
<dbReference type="EC" id="2.8.1.-" evidence="1"/>
<dbReference type="EMBL" id="CP001389">
    <property type="protein sequence ID" value="ACP25399.1"/>
    <property type="molecule type" value="Genomic_DNA"/>
</dbReference>
<dbReference type="RefSeq" id="WP_012708168.1">
    <property type="nucleotide sequence ID" value="NC_012587.1"/>
</dbReference>
<dbReference type="RefSeq" id="YP_002826152.1">
    <property type="nucleotide sequence ID" value="NC_012587.1"/>
</dbReference>
<dbReference type="SMR" id="C3MD80"/>
<dbReference type="STRING" id="394.NGR_c16340"/>
<dbReference type="KEGG" id="rhi:NGR_c16340"/>
<dbReference type="PATRIC" id="fig|394.7.peg.4450"/>
<dbReference type="eggNOG" id="COG0037">
    <property type="taxonomic scope" value="Bacteria"/>
</dbReference>
<dbReference type="HOGENOM" id="CLU_026481_0_0_5"/>
<dbReference type="OrthoDB" id="9801054at2"/>
<dbReference type="Proteomes" id="UP000001054">
    <property type="component" value="Chromosome"/>
</dbReference>
<dbReference type="GO" id="GO:0005737">
    <property type="term" value="C:cytoplasm"/>
    <property type="evidence" value="ECO:0007669"/>
    <property type="project" value="UniProtKB-SubCell"/>
</dbReference>
<dbReference type="GO" id="GO:0051539">
    <property type="term" value="F:4 iron, 4 sulfur cluster binding"/>
    <property type="evidence" value="ECO:0007669"/>
    <property type="project" value="UniProtKB-UniRule"/>
</dbReference>
<dbReference type="GO" id="GO:0005524">
    <property type="term" value="F:ATP binding"/>
    <property type="evidence" value="ECO:0007669"/>
    <property type="project" value="UniProtKB-UniRule"/>
</dbReference>
<dbReference type="GO" id="GO:0000287">
    <property type="term" value="F:magnesium ion binding"/>
    <property type="evidence" value="ECO:0007669"/>
    <property type="project" value="UniProtKB-UniRule"/>
</dbReference>
<dbReference type="GO" id="GO:0016783">
    <property type="term" value="F:sulfurtransferase activity"/>
    <property type="evidence" value="ECO:0007669"/>
    <property type="project" value="UniProtKB-UniRule"/>
</dbReference>
<dbReference type="GO" id="GO:0000049">
    <property type="term" value="F:tRNA binding"/>
    <property type="evidence" value="ECO:0007669"/>
    <property type="project" value="UniProtKB-KW"/>
</dbReference>
<dbReference type="GO" id="GO:0034227">
    <property type="term" value="P:tRNA thio-modification"/>
    <property type="evidence" value="ECO:0007669"/>
    <property type="project" value="UniProtKB-UniRule"/>
</dbReference>
<dbReference type="CDD" id="cd24138">
    <property type="entry name" value="TtcA-like"/>
    <property type="match status" value="1"/>
</dbReference>
<dbReference type="Gene3D" id="3.40.50.620">
    <property type="entry name" value="HUPs"/>
    <property type="match status" value="1"/>
</dbReference>
<dbReference type="HAMAP" id="MF_01850">
    <property type="entry name" value="TtcA"/>
    <property type="match status" value="1"/>
</dbReference>
<dbReference type="InterPro" id="IPR014729">
    <property type="entry name" value="Rossmann-like_a/b/a_fold"/>
</dbReference>
<dbReference type="InterPro" id="IPR011063">
    <property type="entry name" value="TilS/TtcA_N"/>
</dbReference>
<dbReference type="InterPro" id="IPR012089">
    <property type="entry name" value="tRNA_Cyd_32_2_STrfase"/>
</dbReference>
<dbReference type="InterPro" id="IPR035107">
    <property type="entry name" value="tRNA_thiolation_TtcA_Ctu1"/>
</dbReference>
<dbReference type="NCBIfam" id="NF007972">
    <property type="entry name" value="PRK10696.1"/>
    <property type="match status" value="1"/>
</dbReference>
<dbReference type="PANTHER" id="PTHR43686:SF1">
    <property type="entry name" value="AMINOTRAN_5 DOMAIN-CONTAINING PROTEIN"/>
    <property type="match status" value="1"/>
</dbReference>
<dbReference type="PANTHER" id="PTHR43686">
    <property type="entry name" value="SULFURTRANSFERASE-RELATED"/>
    <property type="match status" value="1"/>
</dbReference>
<dbReference type="Pfam" id="PF01171">
    <property type="entry name" value="ATP_bind_3"/>
    <property type="match status" value="1"/>
</dbReference>
<dbReference type="PIRSF" id="PIRSF004976">
    <property type="entry name" value="ATPase_YdaO"/>
    <property type="match status" value="1"/>
</dbReference>
<dbReference type="SUPFAM" id="SSF52402">
    <property type="entry name" value="Adenine nucleotide alpha hydrolases-like"/>
    <property type="match status" value="1"/>
</dbReference>
<comment type="function">
    <text evidence="1">Catalyzes the ATP-dependent 2-thiolation of cytidine in position 32 of tRNA, to form 2-thiocytidine (s(2)C32). The sulfur atoms are provided by the cysteine/cysteine desulfurase (IscS) system.</text>
</comment>
<comment type="catalytic activity">
    <reaction evidence="1">
        <text>cytidine(32) in tRNA + S-sulfanyl-L-cysteinyl-[cysteine desulfurase] + AH2 + ATP = 2-thiocytidine(32) in tRNA + L-cysteinyl-[cysteine desulfurase] + A + AMP + diphosphate + H(+)</text>
        <dbReference type="Rhea" id="RHEA:57048"/>
        <dbReference type="Rhea" id="RHEA-COMP:10288"/>
        <dbReference type="Rhea" id="RHEA-COMP:12157"/>
        <dbReference type="Rhea" id="RHEA-COMP:12158"/>
        <dbReference type="Rhea" id="RHEA-COMP:14821"/>
        <dbReference type="ChEBI" id="CHEBI:13193"/>
        <dbReference type="ChEBI" id="CHEBI:15378"/>
        <dbReference type="ChEBI" id="CHEBI:17499"/>
        <dbReference type="ChEBI" id="CHEBI:29950"/>
        <dbReference type="ChEBI" id="CHEBI:30616"/>
        <dbReference type="ChEBI" id="CHEBI:33019"/>
        <dbReference type="ChEBI" id="CHEBI:61963"/>
        <dbReference type="ChEBI" id="CHEBI:82748"/>
        <dbReference type="ChEBI" id="CHEBI:141453"/>
        <dbReference type="ChEBI" id="CHEBI:456215"/>
    </reaction>
    <physiologicalReaction direction="left-to-right" evidence="1">
        <dbReference type="Rhea" id="RHEA:57049"/>
    </physiologicalReaction>
</comment>
<comment type="cofactor">
    <cofactor evidence="1">
        <name>Mg(2+)</name>
        <dbReference type="ChEBI" id="CHEBI:18420"/>
    </cofactor>
</comment>
<comment type="cofactor">
    <cofactor evidence="1">
        <name>[4Fe-4S] cluster</name>
        <dbReference type="ChEBI" id="CHEBI:49883"/>
    </cofactor>
    <text evidence="1">Binds 1 [4Fe-4S] cluster per subunit. The cluster is chelated by three Cys residues, the fourth Fe has a free coordination site that may bind a sulfur atom transferred from the persulfide of IscS.</text>
</comment>
<comment type="pathway">
    <text evidence="1">tRNA modification.</text>
</comment>
<comment type="subunit">
    <text evidence="1">Homodimer.</text>
</comment>
<comment type="subcellular location">
    <subcellularLocation>
        <location evidence="1">Cytoplasm</location>
    </subcellularLocation>
</comment>
<comment type="miscellaneous">
    <text evidence="1">The thiolation reaction likely consists of two steps: a first activation step by ATP to form an adenylated intermediate of the target base of tRNA, and a second nucleophilic substitution step of the sulfur (S) atom supplied by the hydrosulfide attached to the Fe-S cluster.</text>
</comment>
<comment type="similarity">
    <text evidence="1">Belongs to the TtcA family.</text>
</comment>
<keyword id="KW-0004">4Fe-4S</keyword>
<keyword id="KW-0067">ATP-binding</keyword>
<keyword id="KW-0963">Cytoplasm</keyword>
<keyword id="KW-0408">Iron</keyword>
<keyword id="KW-0411">Iron-sulfur</keyword>
<keyword id="KW-0460">Magnesium</keyword>
<keyword id="KW-0479">Metal-binding</keyword>
<keyword id="KW-0547">Nucleotide-binding</keyword>
<keyword id="KW-1185">Reference proteome</keyword>
<keyword id="KW-0694">RNA-binding</keyword>
<keyword id="KW-0808">Transferase</keyword>
<keyword id="KW-0819">tRNA processing</keyword>
<keyword id="KW-0820">tRNA-binding</keyword>
<reference key="1">
    <citation type="journal article" date="2009" name="Appl. Environ. Microbiol.">
        <title>Rhizobium sp. strain NGR234 possesses a remarkable number of secretion systems.</title>
        <authorList>
            <person name="Schmeisser C."/>
            <person name="Liesegang H."/>
            <person name="Krysciak D."/>
            <person name="Bakkou N."/>
            <person name="Le Quere A."/>
            <person name="Wollherr A."/>
            <person name="Heinemeyer I."/>
            <person name="Morgenstern B."/>
            <person name="Pommerening-Roeser A."/>
            <person name="Flores M."/>
            <person name="Palacios R."/>
            <person name="Brenner S."/>
            <person name="Gottschalk G."/>
            <person name="Schmitz R.A."/>
            <person name="Broughton W.J."/>
            <person name="Perret X."/>
            <person name="Strittmatter A.W."/>
            <person name="Streit W.R."/>
        </authorList>
    </citation>
    <scope>NUCLEOTIDE SEQUENCE [LARGE SCALE GENOMIC DNA]</scope>
    <source>
        <strain>NBRC 101917 / NGR234</strain>
    </source>
</reference>
<accession>C3MD80</accession>
<proteinExistence type="inferred from homology"/>